<organism>
    <name type="scientific">Influenza A virus (strain A/Turkey/Ontario/6118/1968 H8N4)</name>
    <dbReference type="NCBI Taxonomy" id="311175"/>
    <lineage>
        <taxon>Viruses</taxon>
        <taxon>Riboviria</taxon>
        <taxon>Orthornavirae</taxon>
        <taxon>Negarnaviricota</taxon>
        <taxon>Polyploviricotina</taxon>
        <taxon>Insthoviricetes</taxon>
        <taxon>Articulavirales</taxon>
        <taxon>Orthomyxoviridae</taxon>
        <taxon>Alphainfluenzavirus</taxon>
        <taxon>Alphainfluenzavirus influenzae</taxon>
        <taxon>Influenza A virus</taxon>
    </lineage>
</organism>
<keyword id="KW-0025">Alternative splicing</keyword>
<keyword id="KW-1015">Disulfide bond</keyword>
<keyword id="KW-1032">Host cell membrane</keyword>
<keyword id="KW-1043">Host membrane</keyword>
<keyword id="KW-0945">Host-virus interaction</keyword>
<keyword id="KW-0375">Hydrogen ion transport</keyword>
<keyword id="KW-1083">Inhibition of host autophagy by virus</keyword>
<keyword id="KW-0407">Ion channel</keyword>
<keyword id="KW-0406">Ion transport</keyword>
<keyword id="KW-0449">Lipoprotein</keyword>
<keyword id="KW-0472">Membrane</keyword>
<keyword id="KW-0564">Palmitate</keyword>
<keyword id="KW-0597">Phosphoprotein</keyword>
<keyword id="KW-0735">Signal-anchor</keyword>
<keyword id="KW-0812">Transmembrane</keyword>
<keyword id="KW-1133">Transmembrane helix</keyword>
<keyword id="KW-0813">Transport</keyword>
<keyword id="KW-1182">Viral ion channel</keyword>
<keyword id="KW-0946">Virion</keyword>
<gene>
    <name evidence="1" type="primary">M</name>
</gene>
<feature type="chain" id="PRO_0000274806" description="Matrix protein 2">
    <location>
        <begin position="1"/>
        <end position="97"/>
    </location>
</feature>
<feature type="topological domain" description="Virion surface" evidence="1">
    <location>
        <begin position="1"/>
        <end position="22"/>
    </location>
</feature>
<feature type="transmembrane region" description="Helical; Signal-anchor for type III membrane protein" evidence="1">
    <location>
        <begin position="23"/>
        <end position="43"/>
    </location>
</feature>
<feature type="topological domain" description="Intravirion" evidence="1">
    <location>
        <begin position="44"/>
        <end position="97"/>
    </location>
</feature>
<feature type="region of interest" description="Disordered" evidence="2">
    <location>
        <begin position="60"/>
        <end position="83"/>
    </location>
</feature>
<feature type="site" description="Essential for channel activity, possibly by being protonated during channel activation, and by forming the channel gate and the selective filter" evidence="1">
    <location>
        <position position="37"/>
    </location>
</feature>
<feature type="site" description="Seems to be involved in pH gating" evidence="1">
    <location>
        <position position="41"/>
    </location>
</feature>
<feature type="modified residue" description="Phosphoserine; by host" evidence="1">
    <location>
        <position position="64"/>
    </location>
</feature>
<feature type="modified residue" description="Phosphoserine; by host" evidence="1">
    <location>
        <position position="82"/>
    </location>
</feature>
<feature type="lipid moiety-binding region" description="S-palmitoyl cysteine; by host" evidence="1">
    <location>
        <position position="50"/>
    </location>
</feature>
<feature type="disulfide bond" description="Interchain (with C-17)" evidence="1">
    <location>
        <position position="17"/>
    </location>
</feature>
<feature type="disulfide bond" description="Interchain (with C-19)" evidence="1">
    <location>
        <position position="19"/>
    </location>
</feature>
<dbReference type="EMBL" id="CY005828">
    <property type="protein sequence ID" value="ABB20526.1"/>
    <property type="molecule type" value="Genomic_RNA"/>
</dbReference>
<dbReference type="SMR" id="Q20P03"/>
<dbReference type="Proteomes" id="UP000007770">
    <property type="component" value="Genome"/>
</dbReference>
<dbReference type="GO" id="GO:0020002">
    <property type="term" value="C:host cell plasma membrane"/>
    <property type="evidence" value="ECO:0007669"/>
    <property type="project" value="UniProtKB-SubCell"/>
</dbReference>
<dbReference type="GO" id="GO:0016020">
    <property type="term" value="C:membrane"/>
    <property type="evidence" value="ECO:0007669"/>
    <property type="project" value="UniProtKB-UniRule"/>
</dbReference>
<dbReference type="GO" id="GO:0055036">
    <property type="term" value="C:virion membrane"/>
    <property type="evidence" value="ECO:0007669"/>
    <property type="project" value="UniProtKB-SubCell"/>
</dbReference>
<dbReference type="GO" id="GO:0005216">
    <property type="term" value="F:monoatomic ion channel activity"/>
    <property type="evidence" value="ECO:0007669"/>
    <property type="project" value="UniProtKB-UniRule"/>
</dbReference>
<dbReference type="GO" id="GO:0015078">
    <property type="term" value="F:proton transmembrane transporter activity"/>
    <property type="evidence" value="ECO:0007669"/>
    <property type="project" value="UniProtKB-UniRule"/>
</dbReference>
<dbReference type="GO" id="GO:0051259">
    <property type="term" value="P:protein complex oligomerization"/>
    <property type="evidence" value="ECO:0007669"/>
    <property type="project" value="UniProtKB-UniRule"/>
</dbReference>
<dbReference type="GO" id="GO:0044694">
    <property type="term" value="P:symbiont genome entry into host cell via pore formation in plasma membrane"/>
    <property type="evidence" value="ECO:0007669"/>
    <property type="project" value="UniProtKB-UniRule"/>
</dbReference>
<dbReference type="GO" id="GO:0140321">
    <property type="term" value="P:symbiont-mediated suppression of host autophagy"/>
    <property type="evidence" value="ECO:0007669"/>
    <property type="project" value="UniProtKB-KW"/>
</dbReference>
<dbReference type="Gene3D" id="6.10.250.1640">
    <property type="match status" value="1"/>
</dbReference>
<dbReference type="HAMAP" id="MF_04069">
    <property type="entry name" value="INFV_M2"/>
    <property type="match status" value="1"/>
</dbReference>
<dbReference type="InterPro" id="IPR002089">
    <property type="entry name" value="Flu_M2"/>
</dbReference>
<dbReference type="Pfam" id="PF00599">
    <property type="entry name" value="Flu_M2"/>
    <property type="match status" value="1"/>
</dbReference>
<proteinExistence type="inferred from homology"/>
<sequence length="97" mass="11144">MSLLTEVETPTRNGWECKCSDSSDPLVVAASIIGILHLILWILDRLFFKCIYRRLKYGLKRGPSTEGVPESMREEYRQEQQSAVDVDDGHFVNIELE</sequence>
<protein>
    <recommendedName>
        <fullName evidence="1">Matrix protein 2</fullName>
    </recommendedName>
    <alternativeName>
        <fullName evidence="1">Proton channel protein M2</fullName>
    </alternativeName>
</protein>
<evidence type="ECO:0000255" key="1">
    <source>
        <dbReference type="HAMAP-Rule" id="MF_04069"/>
    </source>
</evidence>
<evidence type="ECO:0000256" key="2">
    <source>
        <dbReference type="SAM" id="MobiDB-lite"/>
    </source>
</evidence>
<comment type="function">
    <text evidence="1">Forms a proton-selective ion channel that is necessary for the efficient release of the viral genome during virus entry. After attaching to the cell surface, the virion enters the cell by endocytosis. Acidification of the endosome triggers M2 ion channel activity. The influx of protons into virion interior is believed to disrupt interactions between the viral ribonucleoprotein (RNP), matrix protein 1 (M1), and lipid bilayers, thereby freeing the viral genome from interaction with viral proteins and enabling RNA segments to migrate to the host cell nucleus, where influenza virus RNA transcription and replication occur. Also plays a role in viral proteins secretory pathway. Elevates the intravesicular pH of normally acidic compartments, such as trans-Golgi network, preventing newly formed hemagglutinin from premature switching to the fusion-active conformation.</text>
</comment>
<comment type="activity regulation">
    <text>The M2 protein from most influenza A strains is inhibited by amantadine and rimantadine, resulting in viral uncoating incapacity. Emergence of amantadine-resistant variants is usually rapid.</text>
</comment>
<comment type="subunit">
    <text evidence="1">Homotetramer; composed of two disulfide-linked dimers held together by non-covalent interactions. May interact with matrix protein 1.</text>
</comment>
<comment type="subcellular location">
    <subcellularLocation>
        <location evidence="1">Virion membrane</location>
    </subcellularLocation>
    <subcellularLocation>
        <location evidence="1">Host apical cell membrane</location>
        <topology evidence="1">Single-pass type III membrane protein</topology>
    </subcellularLocation>
    <text evidence="1">Abundantly expressed at the apical plasma membrane in infected polarized epithelial cells, in close proximity to budding and assembled virions. Minor component of virions (only 16-20 molecules/virion).</text>
</comment>
<comment type="alternative products">
    <event type="alternative splicing"/>
    <isoform>
        <id>Q20P03-1</id>
        <name>M2</name>
        <sequence type="displayed"/>
    </isoform>
    <isoform>
        <id>Q20P02-1</id>
        <name>M1</name>
        <sequence type="external"/>
    </isoform>
    <text>Only the first 9 residues are shared by the 2 isoforms.</text>
</comment>
<comment type="domain">
    <text evidence="1">Cytoplasmic tail plays an important role in virion assembly and morphogenesis.</text>
</comment>
<comment type="miscellaneous">
    <text evidence="1">When the channel is activated, one or more imidazole moieties of His-37 probably become bi-protonated.</text>
</comment>
<comment type="similarity">
    <text evidence="1">Belongs to the influenza viruses matrix protein M2 family.</text>
</comment>
<reference key="1">
    <citation type="journal article" date="2006" name="Science">
        <title>Large-scale sequence analysis of avian influenza isolates.</title>
        <authorList>
            <person name="Obenauer J.C."/>
            <person name="Denson J."/>
            <person name="Mehta P.K."/>
            <person name="Su X."/>
            <person name="Mukatira S."/>
            <person name="Finkelstein D.B."/>
            <person name="Xu X."/>
            <person name="Wang J."/>
            <person name="Ma J."/>
            <person name="Fan Y."/>
            <person name="Rakestraw K.M."/>
            <person name="Webster R.G."/>
            <person name="Hoffmann E."/>
            <person name="Krauss S."/>
            <person name="Zheng J."/>
            <person name="Zhang Z."/>
            <person name="Naeve C.W."/>
        </authorList>
    </citation>
    <scope>NUCLEOTIDE SEQUENCE [GENOMIC RNA]</scope>
</reference>
<accession>Q20P03</accession>
<organismHost>
    <name type="scientific">Aves</name>
    <dbReference type="NCBI Taxonomy" id="8782"/>
</organismHost>
<name>M2_I68A3</name>